<keyword id="KW-0066">ATP synthesis</keyword>
<keyword id="KW-0067">ATP-binding</keyword>
<keyword id="KW-0997">Cell inner membrane</keyword>
<keyword id="KW-1003">Cell membrane</keyword>
<keyword id="KW-0139">CF(1)</keyword>
<keyword id="KW-0375">Hydrogen ion transport</keyword>
<keyword id="KW-0406">Ion transport</keyword>
<keyword id="KW-0472">Membrane</keyword>
<keyword id="KW-0547">Nucleotide-binding</keyword>
<keyword id="KW-1185">Reference proteome</keyword>
<keyword id="KW-1278">Translocase</keyword>
<keyword id="KW-0813">Transport</keyword>
<feature type="chain" id="PRO_0000339511" description="ATP synthase subunit beta 1">
    <location>
        <begin position="1"/>
        <end position="480"/>
    </location>
</feature>
<feature type="binding site" evidence="1">
    <location>
        <begin position="154"/>
        <end position="161"/>
    </location>
    <ligand>
        <name>ATP</name>
        <dbReference type="ChEBI" id="CHEBI:30616"/>
    </ligand>
</feature>
<name>ATPB1_CHLTE</name>
<gene>
    <name evidence="1" type="primary">atpD1</name>
    <name type="ordered locus">CT1033</name>
</gene>
<sequence>MGKTEPEQTGIVTSIRGSVVDMRFDELLPSIYSVVKTGREMEVTVEILMQLDRRHVRGIALTPTEGLCRGMKARNTGSPLKAPVGKGTLSRMFDVFGNAIDRRGPVTNVTWRSVHGAPPQLSRRSTKSEVFETGIKIIDLLVPLERGGKAGLFGGAGVGKTVLLTEMIHNMVSKESGVSIFCGIGERCREGEELYRDMSEAGVLDNMVMVFGQMNEPPGSRFRVGLTALTMAEYFRDDLHQEVLLLIDNIFRFIQAGSEISGMIGQMPSRLGYQPTIGTELSALEERIANTGTGAITSIQAVYVPADDFTDPAAVHTFSHLSASLVLSRKRAGEGFYPAVDPLSSGSKMAGESIVGRRHYDLAREVRRVLAQYAELKDIIAMLGLEQLSAEDRRLVGRARRLERFFTQPFFTTEQFSGLAGKSVPIANTIDGCERILRDEFENYPERALYMIGSIAEAQEKTVIETTMSESVAAKPEGGN</sequence>
<proteinExistence type="inferred from homology"/>
<organism>
    <name type="scientific">Chlorobaculum tepidum (strain ATCC 49652 / DSM 12025 / NBRC 103806 / TLS)</name>
    <name type="common">Chlorobium tepidum</name>
    <dbReference type="NCBI Taxonomy" id="194439"/>
    <lineage>
        <taxon>Bacteria</taxon>
        <taxon>Pseudomonadati</taxon>
        <taxon>Chlorobiota</taxon>
        <taxon>Chlorobiia</taxon>
        <taxon>Chlorobiales</taxon>
        <taxon>Chlorobiaceae</taxon>
        <taxon>Chlorobaculum</taxon>
    </lineage>
</organism>
<reference key="1">
    <citation type="journal article" date="2002" name="Proc. Natl. Acad. Sci. U.S.A.">
        <title>The complete genome sequence of Chlorobium tepidum TLS, a photosynthetic, anaerobic, green-sulfur bacterium.</title>
        <authorList>
            <person name="Eisen J.A."/>
            <person name="Nelson K.E."/>
            <person name="Paulsen I.T."/>
            <person name="Heidelberg J.F."/>
            <person name="Wu M."/>
            <person name="Dodson R.J."/>
            <person name="DeBoy R.T."/>
            <person name="Gwinn M.L."/>
            <person name="Nelson W.C."/>
            <person name="Haft D.H."/>
            <person name="Hickey E.K."/>
            <person name="Peterson J.D."/>
            <person name="Durkin A.S."/>
            <person name="Kolonay J.F."/>
            <person name="Yang F."/>
            <person name="Holt I.E."/>
            <person name="Umayam L.A."/>
            <person name="Mason T.M."/>
            <person name="Brenner M."/>
            <person name="Shea T.P."/>
            <person name="Parksey D.S."/>
            <person name="Nierman W.C."/>
            <person name="Feldblyum T.V."/>
            <person name="Hansen C.L."/>
            <person name="Craven M.B."/>
            <person name="Radune D."/>
            <person name="Vamathevan J.J."/>
            <person name="Khouri H.M."/>
            <person name="White O."/>
            <person name="Gruber T.M."/>
            <person name="Ketchum K.A."/>
            <person name="Venter J.C."/>
            <person name="Tettelin H."/>
            <person name="Bryant D.A."/>
            <person name="Fraser C.M."/>
        </authorList>
    </citation>
    <scope>NUCLEOTIDE SEQUENCE [LARGE SCALE GENOMIC DNA]</scope>
    <source>
        <strain>ATCC 49652 / DSM 12025 / NBRC 103806 / TLS</strain>
    </source>
</reference>
<protein>
    <recommendedName>
        <fullName evidence="1">ATP synthase subunit beta 1</fullName>
        <ecNumber evidence="1">7.1.2.2</ecNumber>
    </recommendedName>
    <alternativeName>
        <fullName evidence="1">ATP synthase F1 sector subunit beta 1</fullName>
    </alternativeName>
    <alternativeName>
        <fullName evidence="1">F-ATPase subunit beta 1</fullName>
    </alternativeName>
</protein>
<evidence type="ECO:0000255" key="1">
    <source>
        <dbReference type="HAMAP-Rule" id="MF_01347"/>
    </source>
</evidence>
<accession>Q8KDL4</accession>
<dbReference type="EC" id="7.1.2.2" evidence="1"/>
<dbReference type="EMBL" id="AE006470">
    <property type="protein sequence ID" value="AAM72266.1"/>
    <property type="molecule type" value="Genomic_DNA"/>
</dbReference>
<dbReference type="RefSeq" id="NP_661924.1">
    <property type="nucleotide sequence ID" value="NC_002932.3"/>
</dbReference>
<dbReference type="RefSeq" id="WP_010932711.1">
    <property type="nucleotide sequence ID" value="NC_002932.3"/>
</dbReference>
<dbReference type="SMR" id="Q8KDL4"/>
<dbReference type="STRING" id="194439.CT1033"/>
<dbReference type="EnsemblBacteria" id="AAM72266">
    <property type="protein sequence ID" value="AAM72266"/>
    <property type="gene ID" value="CT1033"/>
</dbReference>
<dbReference type="KEGG" id="cte:CT1033"/>
<dbReference type="PATRIC" id="fig|194439.7.peg.941"/>
<dbReference type="eggNOG" id="COG0055">
    <property type="taxonomic scope" value="Bacteria"/>
</dbReference>
<dbReference type="HOGENOM" id="CLU_022398_0_2_10"/>
<dbReference type="OrthoDB" id="9801639at2"/>
<dbReference type="Proteomes" id="UP000001007">
    <property type="component" value="Chromosome"/>
</dbReference>
<dbReference type="GO" id="GO:0005886">
    <property type="term" value="C:plasma membrane"/>
    <property type="evidence" value="ECO:0007669"/>
    <property type="project" value="UniProtKB-SubCell"/>
</dbReference>
<dbReference type="GO" id="GO:0045259">
    <property type="term" value="C:proton-transporting ATP synthase complex"/>
    <property type="evidence" value="ECO:0007669"/>
    <property type="project" value="UniProtKB-KW"/>
</dbReference>
<dbReference type="GO" id="GO:0005524">
    <property type="term" value="F:ATP binding"/>
    <property type="evidence" value="ECO:0007669"/>
    <property type="project" value="UniProtKB-UniRule"/>
</dbReference>
<dbReference type="GO" id="GO:0016887">
    <property type="term" value="F:ATP hydrolysis activity"/>
    <property type="evidence" value="ECO:0007669"/>
    <property type="project" value="InterPro"/>
</dbReference>
<dbReference type="GO" id="GO:0046933">
    <property type="term" value="F:proton-transporting ATP synthase activity, rotational mechanism"/>
    <property type="evidence" value="ECO:0007669"/>
    <property type="project" value="UniProtKB-UniRule"/>
</dbReference>
<dbReference type="GO" id="GO:0046961">
    <property type="term" value="F:proton-transporting ATPase activity, rotational mechanism"/>
    <property type="evidence" value="ECO:0007669"/>
    <property type="project" value="InterPro"/>
</dbReference>
<dbReference type="CDD" id="cd18110">
    <property type="entry name" value="ATP-synt_F1_beta_C"/>
    <property type="match status" value="1"/>
</dbReference>
<dbReference type="CDD" id="cd18115">
    <property type="entry name" value="ATP-synt_F1_beta_N"/>
    <property type="match status" value="1"/>
</dbReference>
<dbReference type="CDD" id="cd01133">
    <property type="entry name" value="F1-ATPase_beta_CD"/>
    <property type="match status" value="1"/>
</dbReference>
<dbReference type="FunFam" id="1.10.1140.10:FF:000006">
    <property type="entry name" value="ATP synthase subunit beta"/>
    <property type="match status" value="1"/>
</dbReference>
<dbReference type="FunFam" id="3.40.50.300:FF:001630">
    <property type="entry name" value="ATP synthase subunit beta"/>
    <property type="match status" value="1"/>
</dbReference>
<dbReference type="Gene3D" id="2.40.10.170">
    <property type="match status" value="1"/>
</dbReference>
<dbReference type="Gene3D" id="1.10.1140.10">
    <property type="entry name" value="Bovine Mitochondrial F1-atpase, Atp Synthase Beta Chain, Chain D, domain 3"/>
    <property type="match status" value="1"/>
</dbReference>
<dbReference type="Gene3D" id="3.40.50.300">
    <property type="entry name" value="P-loop containing nucleotide triphosphate hydrolases"/>
    <property type="match status" value="1"/>
</dbReference>
<dbReference type="HAMAP" id="MF_01347">
    <property type="entry name" value="ATP_synth_beta_bact"/>
    <property type="match status" value="1"/>
</dbReference>
<dbReference type="InterPro" id="IPR003593">
    <property type="entry name" value="AAA+_ATPase"/>
</dbReference>
<dbReference type="InterPro" id="IPR017691">
    <property type="entry name" value="Alt_ATPase_F1_bsu"/>
</dbReference>
<dbReference type="InterPro" id="IPR055190">
    <property type="entry name" value="ATP-synt_VA_C"/>
</dbReference>
<dbReference type="InterPro" id="IPR005722">
    <property type="entry name" value="ATP_synth_F1_bsu"/>
</dbReference>
<dbReference type="InterPro" id="IPR050053">
    <property type="entry name" value="ATPase_alpha/beta_chains"/>
</dbReference>
<dbReference type="InterPro" id="IPR004100">
    <property type="entry name" value="ATPase_F1/V1/A1_a/bsu_N"/>
</dbReference>
<dbReference type="InterPro" id="IPR036121">
    <property type="entry name" value="ATPase_F1/V1/A1_a/bsu_N_sf"/>
</dbReference>
<dbReference type="InterPro" id="IPR000194">
    <property type="entry name" value="ATPase_F1/V1/A1_a/bsu_nucl-bd"/>
</dbReference>
<dbReference type="InterPro" id="IPR024034">
    <property type="entry name" value="ATPase_F1/V1_b/a_C"/>
</dbReference>
<dbReference type="InterPro" id="IPR027417">
    <property type="entry name" value="P-loop_NTPase"/>
</dbReference>
<dbReference type="NCBIfam" id="TIGR03305">
    <property type="entry name" value="alt_F1F0_F1_bet"/>
    <property type="match status" value="1"/>
</dbReference>
<dbReference type="NCBIfam" id="TIGR01039">
    <property type="entry name" value="atpD"/>
    <property type="match status" value="1"/>
</dbReference>
<dbReference type="PANTHER" id="PTHR15184">
    <property type="entry name" value="ATP SYNTHASE"/>
    <property type="match status" value="1"/>
</dbReference>
<dbReference type="PANTHER" id="PTHR15184:SF71">
    <property type="entry name" value="ATP SYNTHASE SUBUNIT BETA, MITOCHONDRIAL"/>
    <property type="match status" value="1"/>
</dbReference>
<dbReference type="Pfam" id="PF00006">
    <property type="entry name" value="ATP-synt_ab"/>
    <property type="match status" value="1"/>
</dbReference>
<dbReference type="Pfam" id="PF02874">
    <property type="entry name" value="ATP-synt_ab_N"/>
    <property type="match status" value="1"/>
</dbReference>
<dbReference type="Pfam" id="PF22919">
    <property type="entry name" value="ATP-synt_VA_C"/>
    <property type="match status" value="1"/>
</dbReference>
<dbReference type="SMART" id="SM00382">
    <property type="entry name" value="AAA"/>
    <property type="match status" value="1"/>
</dbReference>
<dbReference type="SUPFAM" id="SSF47917">
    <property type="entry name" value="C-terminal domain of alpha and beta subunits of F1 ATP synthase"/>
    <property type="match status" value="1"/>
</dbReference>
<dbReference type="SUPFAM" id="SSF50615">
    <property type="entry name" value="N-terminal domain of alpha and beta subunits of F1 ATP synthase"/>
    <property type="match status" value="1"/>
</dbReference>
<dbReference type="SUPFAM" id="SSF52540">
    <property type="entry name" value="P-loop containing nucleoside triphosphate hydrolases"/>
    <property type="match status" value="1"/>
</dbReference>
<comment type="function">
    <text evidence="1">Produces ATP from ADP in the presence of a proton gradient across the membrane. The catalytic sites are hosted primarily by the beta subunits.</text>
</comment>
<comment type="catalytic activity">
    <reaction evidence="1">
        <text>ATP + H2O + 4 H(+)(in) = ADP + phosphate + 5 H(+)(out)</text>
        <dbReference type="Rhea" id="RHEA:57720"/>
        <dbReference type="ChEBI" id="CHEBI:15377"/>
        <dbReference type="ChEBI" id="CHEBI:15378"/>
        <dbReference type="ChEBI" id="CHEBI:30616"/>
        <dbReference type="ChEBI" id="CHEBI:43474"/>
        <dbReference type="ChEBI" id="CHEBI:456216"/>
        <dbReference type="EC" id="7.1.2.2"/>
    </reaction>
</comment>
<comment type="subunit">
    <text evidence="1">F-type ATPases have 2 components, CF(1) - the catalytic core - and CF(0) - the membrane proton channel. CF(1) has five subunits: alpha(3), beta(3), gamma(1), delta(1), epsilon(1). CF(0) has four main subunits: a(1), b(1), b'(1) and c(9-12).</text>
</comment>
<comment type="subcellular location">
    <subcellularLocation>
        <location evidence="1">Cell inner membrane</location>
        <topology evidence="1">Peripheral membrane protein</topology>
    </subcellularLocation>
</comment>
<comment type="similarity">
    <text evidence="1">Belongs to the ATPase alpha/beta chains family.</text>
</comment>